<accession>B2S4U1</accession>
<sequence>MSIDSLPPLREVIERHDLMPKKSLGQNFLFDLNLTSKIARQAGDLRDQPVIEVGPGPGGLTRALLAQGAYVTAIERDDRCLEALAEIAAHYPGRLRIIAGDALEQDFTALFPEGPKPRIVANLPYNVGTQLLLNWLLVEPWPPFYSSMTLMFQREVAERIVAKPDSDHYGRLGVLAGWRTQAKIAFDVPPQAFTPPPKVMSSVVHIVPRETPLPCRAEALGQITQAAFGQRRKMLRQSLKSIGGAALLEKTGIDGTRRAETLSVEEFVALANACLP</sequence>
<proteinExistence type="inferred from homology"/>
<reference key="1">
    <citation type="journal article" date="2008" name="PLoS ONE">
        <title>Genome sequence of Brucella abortus vaccine strain S19 compared to virulent strains yields candidate virulence genes.</title>
        <authorList>
            <person name="Crasta O.R."/>
            <person name="Folkerts O."/>
            <person name="Fei Z."/>
            <person name="Mane S.P."/>
            <person name="Evans C."/>
            <person name="Martino-Catt S."/>
            <person name="Bricker B."/>
            <person name="Yu G."/>
            <person name="Du L."/>
            <person name="Sobral B.W."/>
        </authorList>
    </citation>
    <scope>NUCLEOTIDE SEQUENCE [LARGE SCALE GENOMIC DNA]</scope>
    <source>
        <strain>S19</strain>
    </source>
</reference>
<keyword id="KW-0963">Cytoplasm</keyword>
<keyword id="KW-0489">Methyltransferase</keyword>
<keyword id="KW-0694">RNA-binding</keyword>
<keyword id="KW-0698">rRNA processing</keyword>
<keyword id="KW-0949">S-adenosyl-L-methionine</keyword>
<keyword id="KW-0808">Transferase</keyword>
<name>RSMA_BRUA1</name>
<comment type="function">
    <text evidence="1">Specifically dimethylates two adjacent adenosines (A1518 and A1519) in the loop of a conserved hairpin near the 3'-end of 16S rRNA in the 30S particle. May play a critical role in biogenesis of 30S subunits.</text>
</comment>
<comment type="catalytic activity">
    <reaction evidence="1">
        <text>adenosine(1518)/adenosine(1519) in 16S rRNA + 4 S-adenosyl-L-methionine = N(6)-dimethyladenosine(1518)/N(6)-dimethyladenosine(1519) in 16S rRNA + 4 S-adenosyl-L-homocysteine + 4 H(+)</text>
        <dbReference type="Rhea" id="RHEA:19609"/>
        <dbReference type="Rhea" id="RHEA-COMP:10232"/>
        <dbReference type="Rhea" id="RHEA-COMP:10233"/>
        <dbReference type="ChEBI" id="CHEBI:15378"/>
        <dbReference type="ChEBI" id="CHEBI:57856"/>
        <dbReference type="ChEBI" id="CHEBI:59789"/>
        <dbReference type="ChEBI" id="CHEBI:74411"/>
        <dbReference type="ChEBI" id="CHEBI:74493"/>
        <dbReference type="EC" id="2.1.1.182"/>
    </reaction>
</comment>
<comment type="subcellular location">
    <subcellularLocation>
        <location evidence="1">Cytoplasm</location>
    </subcellularLocation>
</comment>
<comment type="similarity">
    <text evidence="1">Belongs to the class I-like SAM-binding methyltransferase superfamily. rRNA adenine N(6)-methyltransferase family. RsmA subfamily.</text>
</comment>
<protein>
    <recommendedName>
        <fullName evidence="1">Ribosomal RNA small subunit methyltransferase A</fullName>
        <ecNumber evidence="1">2.1.1.182</ecNumber>
    </recommendedName>
    <alternativeName>
        <fullName evidence="1">16S rRNA (adenine(1518)-N(6)/adenine(1519)-N(6))-dimethyltransferase</fullName>
    </alternativeName>
    <alternativeName>
        <fullName evidence="1">16S rRNA dimethyladenosine transferase</fullName>
    </alternativeName>
    <alternativeName>
        <fullName evidence="1">16S rRNA dimethylase</fullName>
    </alternativeName>
    <alternativeName>
        <fullName evidence="1">S-adenosylmethionine-6-N', N'-adenosyl(rRNA) dimethyltransferase</fullName>
    </alternativeName>
</protein>
<evidence type="ECO:0000255" key="1">
    <source>
        <dbReference type="HAMAP-Rule" id="MF_00607"/>
    </source>
</evidence>
<dbReference type="EC" id="2.1.1.182" evidence="1"/>
<dbReference type="EMBL" id="CP000887">
    <property type="protein sequence ID" value="ACD72188.1"/>
    <property type="molecule type" value="Genomic_DNA"/>
</dbReference>
<dbReference type="RefSeq" id="WP_002963824.1">
    <property type="nucleotide sequence ID" value="NC_010742.1"/>
</dbReference>
<dbReference type="SMR" id="B2S4U1"/>
<dbReference type="GeneID" id="97533994"/>
<dbReference type="KEGG" id="bmc:BAbS19_I06570"/>
<dbReference type="HOGENOM" id="CLU_041220_0_1_5"/>
<dbReference type="Proteomes" id="UP000002565">
    <property type="component" value="Chromosome 1"/>
</dbReference>
<dbReference type="GO" id="GO:0005829">
    <property type="term" value="C:cytosol"/>
    <property type="evidence" value="ECO:0007669"/>
    <property type="project" value="TreeGrafter"/>
</dbReference>
<dbReference type="GO" id="GO:0052908">
    <property type="term" value="F:16S rRNA (adenine(1518)-N(6)/adenine(1519)-N(6))-dimethyltransferase activity"/>
    <property type="evidence" value="ECO:0007669"/>
    <property type="project" value="UniProtKB-EC"/>
</dbReference>
<dbReference type="GO" id="GO:0003723">
    <property type="term" value="F:RNA binding"/>
    <property type="evidence" value="ECO:0007669"/>
    <property type="project" value="UniProtKB-KW"/>
</dbReference>
<dbReference type="CDD" id="cd02440">
    <property type="entry name" value="AdoMet_MTases"/>
    <property type="match status" value="1"/>
</dbReference>
<dbReference type="FunFam" id="1.10.8.100:FF:000001">
    <property type="entry name" value="Ribosomal RNA small subunit methyltransferase A"/>
    <property type="match status" value="1"/>
</dbReference>
<dbReference type="Gene3D" id="1.10.8.100">
    <property type="entry name" value="Ribosomal RNA adenine dimethylase-like, domain 2"/>
    <property type="match status" value="1"/>
</dbReference>
<dbReference type="Gene3D" id="3.40.50.150">
    <property type="entry name" value="Vaccinia Virus protein VP39"/>
    <property type="match status" value="1"/>
</dbReference>
<dbReference type="HAMAP" id="MF_00607">
    <property type="entry name" value="16SrRNA_methyltr_A"/>
    <property type="match status" value="1"/>
</dbReference>
<dbReference type="InterPro" id="IPR001737">
    <property type="entry name" value="KsgA/Erm"/>
</dbReference>
<dbReference type="InterPro" id="IPR023165">
    <property type="entry name" value="rRNA_Ade_diMease-like_C"/>
</dbReference>
<dbReference type="InterPro" id="IPR020596">
    <property type="entry name" value="rRNA_Ade_Mease_Trfase_CS"/>
</dbReference>
<dbReference type="InterPro" id="IPR020598">
    <property type="entry name" value="rRNA_Ade_methylase_Trfase_N"/>
</dbReference>
<dbReference type="InterPro" id="IPR011530">
    <property type="entry name" value="rRNA_adenine_dimethylase"/>
</dbReference>
<dbReference type="InterPro" id="IPR029063">
    <property type="entry name" value="SAM-dependent_MTases_sf"/>
</dbReference>
<dbReference type="NCBIfam" id="TIGR00755">
    <property type="entry name" value="ksgA"/>
    <property type="match status" value="1"/>
</dbReference>
<dbReference type="PANTHER" id="PTHR11727">
    <property type="entry name" value="DIMETHYLADENOSINE TRANSFERASE"/>
    <property type="match status" value="1"/>
</dbReference>
<dbReference type="PANTHER" id="PTHR11727:SF7">
    <property type="entry name" value="DIMETHYLADENOSINE TRANSFERASE-RELATED"/>
    <property type="match status" value="1"/>
</dbReference>
<dbReference type="Pfam" id="PF00398">
    <property type="entry name" value="RrnaAD"/>
    <property type="match status" value="1"/>
</dbReference>
<dbReference type="SMART" id="SM00650">
    <property type="entry name" value="rADc"/>
    <property type="match status" value="1"/>
</dbReference>
<dbReference type="SUPFAM" id="SSF53335">
    <property type="entry name" value="S-adenosyl-L-methionine-dependent methyltransferases"/>
    <property type="match status" value="1"/>
</dbReference>
<dbReference type="PROSITE" id="PS01131">
    <property type="entry name" value="RRNA_A_DIMETH"/>
    <property type="match status" value="1"/>
</dbReference>
<dbReference type="PROSITE" id="PS51689">
    <property type="entry name" value="SAM_RNA_A_N6_MT"/>
    <property type="match status" value="1"/>
</dbReference>
<gene>
    <name evidence="1" type="primary">rsmA</name>
    <name evidence="1" type="synonym">ksgA</name>
    <name type="ordered locus">BAbS19_I06570</name>
</gene>
<organism>
    <name type="scientific">Brucella abortus (strain S19)</name>
    <dbReference type="NCBI Taxonomy" id="430066"/>
    <lineage>
        <taxon>Bacteria</taxon>
        <taxon>Pseudomonadati</taxon>
        <taxon>Pseudomonadota</taxon>
        <taxon>Alphaproteobacteria</taxon>
        <taxon>Hyphomicrobiales</taxon>
        <taxon>Brucellaceae</taxon>
        <taxon>Brucella/Ochrobactrum group</taxon>
        <taxon>Brucella</taxon>
    </lineage>
</organism>
<feature type="chain" id="PRO_1000130249" description="Ribosomal RNA small subunit methyltransferase A">
    <location>
        <begin position="1"/>
        <end position="276"/>
    </location>
</feature>
<feature type="binding site" evidence="1">
    <location>
        <position position="27"/>
    </location>
    <ligand>
        <name>S-adenosyl-L-methionine</name>
        <dbReference type="ChEBI" id="CHEBI:59789"/>
    </ligand>
</feature>
<feature type="binding site" evidence="1">
    <location>
        <position position="29"/>
    </location>
    <ligand>
        <name>S-adenosyl-L-methionine</name>
        <dbReference type="ChEBI" id="CHEBI:59789"/>
    </ligand>
</feature>
<feature type="binding site" evidence="1">
    <location>
        <position position="54"/>
    </location>
    <ligand>
        <name>S-adenosyl-L-methionine</name>
        <dbReference type="ChEBI" id="CHEBI:59789"/>
    </ligand>
</feature>
<feature type="binding site" evidence="1">
    <location>
        <position position="75"/>
    </location>
    <ligand>
        <name>S-adenosyl-L-methionine</name>
        <dbReference type="ChEBI" id="CHEBI:59789"/>
    </ligand>
</feature>
<feature type="binding site" evidence="1">
    <location>
        <position position="101"/>
    </location>
    <ligand>
        <name>S-adenosyl-L-methionine</name>
        <dbReference type="ChEBI" id="CHEBI:59789"/>
    </ligand>
</feature>
<feature type="binding site" evidence="1">
    <location>
        <position position="122"/>
    </location>
    <ligand>
        <name>S-adenosyl-L-methionine</name>
        <dbReference type="ChEBI" id="CHEBI:59789"/>
    </ligand>
</feature>